<dbReference type="EC" id="1.1.1.95" evidence="2"/>
<dbReference type="EC" id="1.1.1.399" evidence="2"/>
<dbReference type="EMBL" id="AE005674">
    <property type="protein sequence ID" value="AAN44382.1"/>
    <property type="molecule type" value="Genomic_DNA"/>
</dbReference>
<dbReference type="EMBL" id="AE014073">
    <property type="protein sequence ID" value="AAP18204.1"/>
    <property type="molecule type" value="Genomic_DNA"/>
</dbReference>
<dbReference type="RefSeq" id="NP_708675.1">
    <property type="nucleotide sequence ID" value="NC_004337.2"/>
</dbReference>
<dbReference type="RefSeq" id="WP_001151604.1">
    <property type="nucleotide sequence ID" value="NZ_WPGW01000018.1"/>
</dbReference>
<dbReference type="SMR" id="P0A9T3"/>
<dbReference type="STRING" id="198214.SF2898"/>
<dbReference type="PaxDb" id="198214-SF2898"/>
<dbReference type="GeneID" id="1025927"/>
<dbReference type="GeneID" id="93779086"/>
<dbReference type="KEGG" id="sfl:SF2898"/>
<dbReference type="KEGG" id="sfx:S3098"/>
<dbReference type="PATRIC" id="fig|198214.7.peg.3447"/>
<dbReference type="HOGENOM" id="CLU_019796_9_2_6"/>
<dbReference type="UniPathway" id="UPA00135">
    <property type="reaction ID" value="UER00196"/>
</dbReference>
<dbReference type="Proteomes" id="UP000001006">
    <property type="component" value="Chromosome"/>
</dbReference>
<dbReference type="Proteomes" id="UP000002673">
    <property type="component" value="Chromosome"/>
</dbReference>
<dbReference type="GO" id="GO:0051287">
    <property type="term" value="F:NAD binding"/>
    <property type="evidence" value="ECO:0007669"/>
    <property type="project" value="InterPro"/>
</dbReference>
<dbReference type="GO" id="GO:0004617">
    <property type="term" value="F:phosphoglycerate dehydrogenase activity"/>
    <property type="evidence" value="ECO:0007669"/>
    <property type="project" value="UniProtKB-EC"/>
</dbReference>
<dbReference type="GO" id="GO:0006564">
    <property type="term" value="P:L-serine biosynthetic process"/>
    <property type="evidence" value="ECO:0007669"/>
    <property type="project" value="UniProtKB-KW"/>
</dbReference>
<dbReference type="CDD" id="cd04901">
    <property type="entry name" value="ACT_3PGDH"/>
    <property type="match status" value="1"/>
</dbReference>
<dbReference type="CDD" id="cd12176">
    <property type="entry name" value="PGDH_3"/>
    <property type="match status" value="1"/>
</dbReference>
<dbReference type="FunFam" id="3.30.70.260:FF:000007">
    <property type="entry name" value="D-3-phosphoglycerate dehydrogenase"/>
    <property type="match status" value="1"/>
</dbReference>
<dbReference type="FunFam" id="3.40.50.720:FF:000041">
    <property type="entry name" value="D-3-phosphoglycerate dehydrogenase"/>
    <property type="match status" value="1"/>
</dbReference>
<dbReference type="Gene3D" id="3.30.70.260">
    <property type="match status" value="1"/>
</dbReference>
<dbReference type="Gene3D" id="3.40.50.720">
    <property type="entry name" value="NAD(P)-binding Rossmann-like Domain"/>
    <property type="match status" value="2"/>
</dbReference>
<dbReference type="InterPro" id="IPR045865">
    <property type="entry name" value="ACT-like_dom_sf"/>
</dbReference>
<dbReference type="InterPro" id="IPR002912">
    <property type="entry name" value="ACT_dom"/>
</dbReference>
<dbReference type="InterPro" id="IPR054480">
    <property type="entry name" value="AHAS_small-like_ACT"/>
</dbReference>
<dbReference type="InterPro" id="IPR050223">
    <property type="entry name" value="D-isomer_2-hydroxyacid_DH"/>
</dbReference>
<dbReference type="InterPro" id="IPR006139">
    <property type="entry name" value="D-isomer_2_OHA_DH_cat_dom"/>
</dbReference>
<dbReference type="InterPro" id="IPR029753">
    <property type="entry name" value="D-isomer_DH_CS"/>
</dbReference>
<dbReference type="InterPro" id="IPR029752">
    <property type="entry name" value="D-isomer_DH_CS1"/>
</dbReference>
<dbReference type="InterPro" id="IPR006140">
    <property type="entry name" value="D-isomer_DH_NAD-bd"/>
</dbReference>
<dbReference type="InterPro" id="IPR036291">
    <property type="entry name" value="NAD(P)-bd_dom_sf"/>
</dbReference>
<dbReference type="NCBIfam" id="NF008759">
    <property type="entry name" value="PRK11790.1"/>
    <property type="match status" value="1"/>
</dbReference>
<dbReference type="PANTHER" id="PTHR10996">
    <property type="entry name" value="2-HYDROXYACID DEHYDROGENASE-RELATED"/>
    <property type="match status" value="1"/>
</dbReference>
<dbReference type="PANTHER" id="PTHR10996:SF282">
    <property type="entry name" value="D-3-PHOSPHOGLYCERATE DEHYDROGENASE 1-RELATED"/>
    <property type="match status" value="1"/>
</dbReference>
<dbReference type="Pfam" id="PF00389">
    <property type="entry name" value="2-Hacid_dh"/>
    <property type="match status" value="1"/>
</dbReference>
<dbReference type="Pfam" id="PF02826">
    <property type="entry name" value="2-Hacid_dh_C"/>
    <property type="match status" value="1"/>
</dbReference>
<dbReference type="Pfam" id="PF22629">
    <property type="entry name" value="ACT_AHAS_ss"/>
    <property type="match status" value="1"/>
</dbReference>
<dbReference type="SUPFAM" id="SSF55021">
    <property type="entry name" value="ACT-like"/>
    <property type="match status" value="1"/>
</dbReference>
<dbReference type="SUPFAM" id="SSF52283">
    <property type="entry name" value="Formate/glycerate dehydrogenase catalytic domain-like"/>
    <property type="match status" value="1"/>
</dbReference>
<dbReference type="SUPFAM" id="SSF51735">
    <property type="entry name" value="NAD(P)-binding Rossmann-fold domains"/>
    <property type="match status" value="1"/>
</dbReference>
<dbReference type="PROSITE" id="PS51671">
    <property type="entry name" value="ACT"/>
    <property type="match status" value="1"/>
</dbReference>
<dbReference type="PROSITE" id="PS00065">
    <property type="entry name" value="D_2_HYDROXYACID_DH_1"/>
    <property type="match status" value="1"/>
</dbReference>
<dbReference type="PROSITE" id="PS00670">
    <property type="entry name" value="D_2_HYDROXYACID_DH_2"/>
    <property type="match status" value="1"/>
</dbReference>
<dbReference type="PROSITE" id="PS00671">
    <property type="entry name" value="D_2_HYDROXYACID_DH_3"/>
    <property type="match status" value="1"/>
</dbReference>
<gene>
    <name type="primary">serA</name>
    <name type="ordered locus">SF2898</name>
    <name type="ordered locus">S3098</name>
</gene>
<proteinExistence type="inferred from homology"/>
<feature type="initiator methionine" description="Removed" evidence="1">
    <location>
        <position position="1"/>
    </location>
</feature>
<feature type="chain" id="PRO_0000076006" description="D-3-phosphoglycerate dehydrogenase">
    <location>
        <begin position="2"/>
        <end position="410"/>
    </location>
</feature>
<feature type="domain" description="ACT" evidence="3">
    <location>
        <begin position="339"/>
        <end position="410"/>
    </location>
</feature>
<feature type="active site" evidence="1">
    <location>
        <position position="240"/>
    </location>
</feature>
<feature type="active site" evidence="1">
    <location>
        <position position="269"/>
    </location>
</feature>
<feature type="active site" description="Proton donor" evidence="1">
    <location>
        <position position="292"/>
    </location>
</feature>
<feature type="binding site" evidence="2">
    <location>
        <begin position="161"/>
        <end position="162"/>
    </location>
    <ligand>
        <name>NAD(+)</name>
        <dbReference type="ChEBI" id="CHEBI:57540"/>
    </ligand>
</feature>
<feature type="binding site" evidence="2">
    <location>
        <position position="181"/>
    </location>
    <ligand>
        <name>NAD(+)</name>
        <dbReference type="ChEBI" id="CHEBI:57540"/>
    </ligand>
</feature>
<feature type="binding site" evidence="2">
    <location>
        <begin position="238"/>
        <end position="240"/>
    </location>
    <ligand>
        <name>NAD(+)</name>
        <dbReference type="ChEBI" id="CHEBI:57540"/>
    </ligand>
</feature>
<feature type="binding site" evidence="2">
    <location>
        <position position="264"/>
    </location>
    <ligand>
        <name>NAD(+)</name>
        <dbReference type="ChEBI" id="CHEBI:57540"/>
    </ligand>
</feature>
<feature type="binding site" evidence="2">
    <location>
        <begin position="292"/>
        <end position="295"/>
    </location>
    <ligand>
        <name>NAD(+)</name>
        <dbReference type="ChEBI" id="CHEBI:57540"/>
    </ligand>
</feature>
<sequence>MAKVSLEKDKIKFLLVEGVHQKALESLRAAGYTNIEFHKGALDDEQLKESIRDAHFIGLRSRTHLTEDVINAAEKLVAIGCFCIGTNQVDLDAAAKRGIPVFNAPFSNTRSVAELVIGELLLLLRGVPEANAKAHRGVWNKLAAGSFEARGKKLGIIGYGHIGTQLGILAESLGMYVYFYDIENKLPLGNATQVQHLSDLLNMSDVVSLHVPENPSTKNMMGAKEISLMKPGSLLINASRGTVVDIPALCDALASKHLAGAAIDVFPTEPATNSDPFTSPLCEFDNVLLTPHIGGSTQEAQENIGLEVAGKLIKYSDNGSTLSAVNFPEVSLPLHGGRRLMHIHENRPGVLTALNKIFAEQGVNIAAQYLQTSAQMGYVVIDIEADEDVAEKALQAMKAIPGTIRARLLY</sequence>
<reference key="1">
    <citation type="journal article" date="2002" name="Nucleic Acids Res.">
        <title>Genome sequence of Shigella flexneri 2a: insights into pathogenicity through comparison with genomes of Escherichia coli K12 and O157.</title>
        <authorList>
            <person name="Jin Q."/>
            <person name="Yuan Z."/>
            <person name="Xu J."/>
            <person name="Wang Y."/>
            <person name="Shen Y."/>
            <person name="Lu W."/>
            <person name="Wang J."/>
            <person name="Liu H."/>
            <person name="Yang J."/>
            <person name="Yang F."/>
            <person name="Zhang X."/>
            <person name="Zhang J."/>
            <person name="Yang G."/>
            <person name="Wu H."/>
            <person name="Qu D."/>
            <person name="Dong J."/>
            <person name="Sun L."/>
            <person name="Xue Y."/>
            <person name="Zhao A."/>
            <person name="Gao Y."/>
            <person name="Zhu J."/>
            <person name="Kan B."/>
            <person name="Ding K."/>
            <person name="Chen S."/>
            <person name="Cheng H."/>
            <person name="Yao Z."/>
            <person name="He B."/>
            <person name="Chen R."/>
            <person name="Ma D."/>
            <person name="Qiang B."/>
            <person name="Wen Y."/>
            <person name="Hou Y."/>
            <person name="Yu J."/>
        </authorList>
    </citation>
    <scope>NUCLEOTIDE SEQUENCE [LARGE SCALE GENOMIC DNA]</scope>
    <source>
        <strain>301 / Serotype 2a</strain>
    </source>
</reference>
<reference key="2">
    <citation type="journal article" date="2003" name="Infect. Immun.">
        <title>Complete genome sequence and comparative genomics of Shigella flexneri serotype 2a strain 2457T.</title>
        <authorList>
            <person name="Wei J."/>
            <person name="Goldberg M.B."/>
            <person name="Burland V."/>
            <person name="Venkatesan M.M."/>
            <person name="Deng W."/>
            <person name="Fournier G."/>
            <person name="Mayhew G.F."/>
            <person name="Plunkett G. III"/>
            <person name="Rose D.J."/>
            <person name="Darling A."/>
            <person name="Mau B."/>
            <person name="Perna N.T."/>
            <person name="Payne S.M."/>
            <person name="Runyen-Janecky L.J."/>
            <person name="Zhou S."/>
            <person name="Schwartz D.C."/>
            <person name="Blattner F.R."/>
        </authorList>
    </citation>
    <scope>NUCLEOTIDE SEQUENCE [LARGE SCALE GENOMIC DNA]</scope>
    <source>
        <strain>ATCC 700930 / 2457T / Serotype 2a</strain>
    </source>
</reference>
<name>SERA_SHIFL</name>
<comment type="function">
    <text evidence="2">Catalyzes the reversible oxidation of 3-phospho-D-glycerate to 3-phosphonooxypyruvate, the first step of the phosphorylated L-serine biosynthesis pathway. Also catalyzes the reversible oxidation of 2-hydroxyglutarate to 2-oxoglutarate.</text>
</comment>
<comment type="catalytic activity">
    <reaction evidence="2">
        <text>(2R)-3-phosphoglycerate + NAD(+) = 3-phosphooxypyruvate + NADH + H(+)</text>
        <dbReference type="Rhea" id="RHEA:12641"/>
        <dbReference type="ChEBI" id="CHEBI:15378"/>
        <dbReference type="ChEBI" id="CHEBI:18110"/>
        <dbReference type="ChEBI" id="CHEBI:57540"/>
        <dbReference type="ChEBI" id="CHEBI:57945"/>
        <dbReference type="ChEBI" id="CHEBI:58272"/>
        <dbReference type="EC" id="1.1.1.95"/>
    </reaction>
</comment>
<comment type="catalytic activity">
    <reaction evidence="2">
        <text>(R)-2-hydroxyglutarate + NAD(+) = 2-oxoglutarate + NADH + H(+)</text>
        <dbReference type="Rhea" id="RHEA:49612"/>
        <dbReference type="ChEBI" id="CHEBI:15378"/>
        <dbReference type="ChEBI" id="CHEBI:15801"/>
        <dbReference type="ChEBI" id="CHEBI:16810"/>
        <dbReference type="ChEBI" id="CHEBI:57540"/>
        <dbReference type="ChEBI" id="CHEBI:57945"/>
        <dbReference type="EC" id="1.1.1.399"/>
    </reaction>
</comment>
<comment type="activity regulation">
    <text evidence="1">In bacteria displays feedback inhibition by L-serine.</text>
</comment>
<comment type="pathway">
    <text>Amino-acid biosynthesis; L-serine biosynthesis; L-serine from 3-phospho-D-glycerate: step 1/3.</text>
</comment>
<comment type="subunit">
    <text evidence="1">Homotetramer.</text>
</comment>
<comment type="similarity">
    <text evidence="4">Belongs to the D-isomer specific 2-hydroxyacid dehydrogenase family.</text>
</comment>
<evidence type="ECO:0000250" key="1"/>
<evidence type="ECO:0000250" key="2">
    <source>
        <dbReference type="UniProtKB" id="P0A9T0"/>
    </source>
</evidence>
<evidence type="ECO:0000255" key="3">
    <source>
        <dbReference type="PROSITE-ProRule" id="PRU01007"/>
    </source>
</evidence>
<evidence type="ECO:0000305" key="4"/>
<accession>P0A9T3</accession>
<accession>P08328</accession>
<accession>Q47633</accession>
<keyword id="KW-0028">Amino-acid biosynthesis</keyword>
<keyword id="KW-0520">NAD</keyword>
<keyword id="KW-0560">Oxidoreductase</keyword>
<keyword id="KW-1185">Reference proteome</keyword>
<keyword id="KW-0718">Serine biosynthesis</keyword>
<protein>
    <recommendedName>
        <fullName>D-3-phosphoglycerate dehydrogenase</fullName>
        <shortName>PGDH</shortName>
        <ecNumber evidence="2">1.1.1.95</ecNumber>
    </recommendedName>
    <alternativeName>
        <fullName evidence="2">2-oxoglutarate reductase</fullName>
        <ecNumber evidence="2">1.1.1.399</ecNumber>
    </alternativeName>
</protein>
<organism>
    <name type="scientific">Shigella flexneri</name>
    <dbReference type="NCBI Taxonomy" id="623"/>
    <lineage>
        <taxon>Bacteria</taxon>
        <taxon>Pseudomonadati</taxon>
        <taxon>Pseudomonadota</taxon>
        <taxon>Gammaproteobacteria</taxon>
        <taxon>Enterobacterales</taxon>
        <taxon>Enterobacteriaceae</taxon>
        <taxon>Shigella</taxon>
    </lineage>
</organism>